<sequence>MGIPGLEGLHTWISIPFSFMYIVAVAGNIFLIFLIMTERSLHEPMYLFLSMLASADFLLATAAAPKVLAILWFHSMDISFGSCVSQMFFIHFIFVAESAILLAMAFDRYVAICYPLRYTILTSSAVRKIGIAAVVRSFFICCPFIFLVYRLTYCGRNIIPHSYCEHIARLACGNINVNIIYGLTVALLSTGLDIVLIIISYTMILHSVFQISSWAARFKALSTCGSHICVIFMFYTPAFFSFLAHRFGGKTIPHHIHILVGSLYVLVPPMLNPIIYGVKTKQIKDRVILLFSPISVCC</sequence>
<reference key="1">
    <citation type="journal article" date="2006" name="Nature">
        <title>Human chromosome 11 DNA sequence and analysis including novel gene identification.</title>
        <authorList>
            <person name="Taylor T.D."/>
            <person name="Noguchi H."/>
            <person name="Totoki Y."/>
            <person name="Toyoda A."/>
            <person name="Kuroki Y."/>
            <person name="Dewar K."/>
            <person name="Lloyd C."/>
            <person name="Itoh T."/>
            <person name="Takeda T."/>
            <person name="Kim D.-W."/>
            <person name="She X."/>
            <person name="Barlow K.F."/>
            <person name="Bloom T."/>
            <person name="Bruford E."/>
            <person name="Chang J.L."/>
            <person name="Cuomo C.A."/>
            <person name="Eichler E."/>
            <person name="FitzGerald M.G."/>
            <person name="Jaffe D.B."/>
            <person name="LaButti K."/>
            <person name="Nicol R."/>
            <person name="Park H.-S."/>
            <person name="Seaman C."/>
            <person name="Sougnez C."/>
            <person name="Yang X."/>
            <person name="Zimmer A.R."/>
            <person name="Zody M.C."/>
            <person name="Birren B.W."/>
            <person name="Nusbaum C."/>
            <person name="Fujiyama A."/>
            <person name="Hattori M."/>
            <person name="Rogers J."/>
            <person name="Lander E.S."/>
            <person name="Sakaki Y."/>
        </authorList>
    </citation>
    <scope>NUCLEOTIDE SEQUENCE [LARGE SCALE GENOMIC DNA]</scope>
</reference>
<reference key="2">
    <citation type="journal article" date="2007" name="PLoS Biol.">
        <title>Genetic elucidation of human hyperosmia to isovaleric acid.</title>
        <authorList>
            <person name="Menashe I."/>
            <person name="Abaffy T."/>
            <person name="Hasin Y."/>
            <person name="Goshen S."/>
            <person name="Yahalom V."/>
            <person name="Luetje C.W."/>
            <person name="Lancet D."/>
        </authorList>
    </citation>
    <scope>POLYMORPHISM</scope>
</reference>
<comment type="function">
    <text evidence="3">Odorant receptor.</text>
</comment>
<comment type="subcellular location">
    <subcellularLocation>
        <location evidence="3">Cell membrane</location>
        <topology evidence="1">Multi-pass membrane protein</topology>
    </subcellularLocation>
</comment>
<comment type="polymorphism">
    <text evidence="4">Segregating pseudogene, locus showing both intact and pseudogene forms in the population. A single nucleotide insertion at position Gly-8 in the gene coding for this protein is responsible for functional diversity thus producing a pseudogene.</text>
</comment>
<comment type="similarity">
    <text evidence="2">Belongs to the G-protein coupled receptor 1 family.</text>
</comment>
<comment type="online information" name="Human Olfactory Receptor Data Exploratorium (HORDE)">
    <link uri="http://genome.weizmann.ac.il/horde/card/index/symbol:OR52Z1P"/>
</comment>
<organism>
    <name type="scientific">Homo sapiens</name>
    <name type="common">Human</name>
    <dbReference type="NCBI Taxonomy" id="9606"/>
    <lineage>
        <taxon>Eukaryota</taxon>
        <taxon>Metazoa</taxon>
        <taxon>Chordata</taxon>
        <taxon>Craniata</taxon>
        <taxon>Vertebrata</taxon>
        <taxon>Euteleostomi</taxon>
        <taxon>Mammalia</taxon>
        <taxon>Eutheria</taxon>
        <taxon>Euarchontoglires</taxon>
        <taxon>Primates</taxon>
        <taxon>Haplorrhini</taxon>
        <taxon>Catarrhini</taxon>
        <taxon>Hominidae</taxon>
        <taxon>Homo</taxon>
    </lineage>
</organism>
<protein>
    <recommendedName>
        <fullName>Olfactory receptor 52Z1P</fullName>
    </recommendedName>
</protein>
<gene>
    <name evidence="5" type="primary">OR52Z1P</name>
    <name type="synonym">OR52Z1</name>
</gene>
<proteinExistence type="inferred from homology"/>
<evidence type="ECO:0000255" key="1"/>
<evidence type="ECO:0000255" key="2">
    <source>
        <dbReference type="PROSITE-ProRule" id="PRU00521"/>
    </source>
</evidence>
<evidence type="ECO:0000305" key="3"/>
<evidence type="ECO:0000305" key="4">
    <source>
    </source>
</evidence>
<evidence type="ECO:0000312" key="5">
    <source>
        <dbReference type="HGNC" id="HGNC:19596"/>
    </source>
</evidence>
<name>O52Z1_HUMAN</name>
<dbReference type="EMBL" id="AC129505">
    <property type="status" value="NOT_ANNOTATED_CDS"/>
    <property type="molecule type" value="Genomic_DNA"/>
</dbReference>
<dbReference type="RefSeq" id="NP_001335186.1">
    <property type="nucleotide sequence ID" value="NM_001348257.1"/>
</dbReference>
<dbReference type="SMR" id="P0C646"/>
<dbReference type="FunCoup" id="P0C646">
    <property type="interactions" value="70"/>
</dbReference>
<dbReference type="BioMuta" id="OR52Z1"/>
<dbReference type="DMDM" id="166215761"/>
<dbReference type="ProteomicsDB" id="52322"/>
<dbReference type="DNASU" id="283110"/>
<dbReference type="UCSC" id="uc021qct.2">
    <property type="organism name" value="human"/>
</dbReference>
<dbReference type="AGR" id="HGNC:19596"/>
<dbReference type="GeneCards" id="OR52Z1P"/>
<dbReference type="HGNC" id="HGNC:19596">
    <property type="gene designation" value="OR52Z1P"/>
</dbReference>
<dbReference type="neXtProt" id="NX_P0C646"/>
<dbReference type="InParanoid" id="P0C646"/>
<dbReference type="PAN-GO" id="P0C646">
    <property type="GO annotations" value="0 GO annotations based on evolutionary models"/>
</dbReference>
<dbReference type="PhylomeDB" id="P0C646"/>
<dbReference type="PathwayCommons" id="P0C646"/>
<dbReference type="Reactome" id="R-HSA-9752946">
    <property type="pathway name" value="Expression and translocation of olfactory receptors"/>
</dbReference>
<dbReference type="BioGRID-ORCS" id="283110">
    <property type="hits" value="0 hits in 1 CRISPR screen"/>
</dbReference>
<dbReference type="Pharos" id="P0C646">
    <property type="development level" value="Tdark"/>
</dbReference>
<dbReference type="PRO" id="PR:P0C646"/>
<dbReference type="Proteomes" id="UP000005640">
    <property type="component" value="Unplaced"/>
</dbReference>
<dbReference type="RNAct" id="P0C646">
    <property type="molecule type" value="protein"/>
</dbReference>
<dbReference type="GO" id="GO:0005886">
    <property type="term" value="C:plasma membrane"/>
    <property type="evidence" value="ECO:0000318"/>
    <property type="project" value="GO_Central"/>
</dbReference>
<dbReference type="GO" id="GO:0004930">
    <property type="term" value="F:G protein-coupled receptor activity"/>
    <property type="evidence" value="ECO:0007669"/>
    <property type="project" value="UniProtKB-KW"/>
</dbReference>
<dbReference type="GO" id="GO:0004984">
    <property type="term" value="F:olfactory receptor activity"/>
    <property type="evidence" value="ECO:0000318"/>
    <property type="project" value="GO_Central"/>
</dbReference>
<dbReference type="FunFam" id="1.20.1070.10:FF:000006">
    <property type="entry name" value="Olfactory receptor"/>
    <property type="match status" value="1"/>
</dbReference>
<dbReference type="Gene3D" id="1.20.1070.10">
    <property type="entry name" value="Rhodopsin 7-helix transmembrane proteins"/>
    <property type="match status" value="1"/>
</dbReference>
<dbReference type="InterPro" id="IPR000276">
    <property type="entry name" value="GPCR_Rhodpsn"/>
</dbReference>
<dbReference type="InterPro" id="IPR017452">
    <property type="entry name" value="GPCR_Rhodpsn_7TM"/>
</dbReference>
<dbReference type="InterPro" id="IPR000725">
    <property type="entry name" value="Olfact_rcpt"/>
</dbReference>
<dbReference type="InterPro" id="IPR050402">
    <property type="entry name" value="OR51/52/56-like"/>
</dbReference>
<dbReference type="PANTHER" id="PTHR26450:SF63">
    <property type="entry name" value="OLFACTORY RECEPTOR 52Z1P"/>
    <property type="match status" value="1"/>
</dbReference>
<dbReference type="PANTHER" id="PTHR26450">
    <property type="entry name" value="OLFACTORY RECEPTOR 56B1-RELATED"/>
    <property type="match status" value="1"/>
</dbReference>
<dbReference type="Pfam" id="PF13853">
    <property type="entry name" value="7tm_4"/>
    <property type="match status" value="1"/>
</dbReference>
<dbReference type="PRINTS" id="PR00237">
    <property type="entry name" value="GPCRRHODOPSN"/>
</dbReference>
<dbReference type="PRINTS" id="PR00245">
    <property type="entry name" value="OLFACTORYR"/>
</dbReference>
<dbReference type="SMART" id="SM01381">
    <property type="entry name" value="7TM_GPCR_Srsx"/>
    <property type="match status" value="1"/>
</dbReference>
<dbReference type="SUPFAM" id="SSF81321">
    <property type="entry name" value="Family A G protein-coupled receptor-like"/>
    <property type="match status" value="1"/>
</dbReference>
<dbReference type="PROSITE" id="PS00237">
    <property type="entry name" value="G_PROTEIN_RECEP_F1_1"/>
    <property type="match status" value="1"/>
</dbReference>
<dbReference type="PROSITE" id="PS50262">
    <property type="entry name" value="G_PROTEIN_RECEP_F1_2"/>
    <property type="match status" value="1"/>
</dbReference>
<feature type="chain" id="PRO_0000315944" description="Olfactory receptor 52Z1P">
    <location>
        <begin position="1"/>
        <end position="298"/>
    </location>
</feature>
<feature type="topological domain" description="Extracellular" evidence="1">
    <location>
        <begin position="1"/>
        <end position="14"/>
    </location>
</feature>
<feature type="transmembrane region" description="Helical; Name=1" evidence="1">
    <location>
        <begin position="15"/>
        <end position="35"/>
    </location>
</feature>
<feature type="topological domain" description="Cytoplasmic" evidence="1">
    <location>
        <begin position="36"/>
        <end position="43"/>
    </location>
</feature>
<feature type="transmembrane region" description="Helical; Name=2" evidence="1">
    <location>
        <begin position="44"/>
        <end position="64"/>
    </location>
</feature>
<feature type="topological domain" description="Extracellular" evidence="1">
    <location>
        <begin position="65"/>
        <end position="85"/>
    </location>
</feature>
<feature type="transmembrane region" description="Helical; Name=3" evidence="1">
    <location>
        <begin position="86"/>
        <end position="106"/>
    </location>
</feature>
<feature type="topological domain" description="Cytoplasmic" evidence="1">
    <location>
        <begin position="107"/>
        <end position="128"/>
    </location>
</feature>
<feature type="transmembrane region" description="Helical; Name=4" evidence="1">
    <location>
        <begin position="129"/>
        <end position="149"/>
    </location>
</feature>
<feature type="topological domain" description="Extracellular" evidence="1">
    <location>
        <begin position="150"/>
        <end position="178"/>
    </location>
</feature>
<feature type="transmembrane region" description="Helical; Name=5" evidence="1">
    <location>
        <begin position="179"/>
        <end position="199"/>
    </location>
</feature>
<feature type="topological domain" description="Cytoplasmic" evidence="1">
    <location>
        <begin position="200"/>
        <end position="223"/>
    </location>
</feature>
<feature type="transmembrane region" description="Helical; Name=6" evidence="1">
    <location>
        <begin position="224"/>
        <end position="244"/>
    </location>
</feature>
<feature type="topological domain" description="Extracellular" evidence="1">
    <location>
        <begin position="245"/>
        <end position="257"/>
    </location>
</feature>
<feature type="transmembrane region" description="Helical; Name=7" evidence="1">
    <location>
        <begin position="258"/>
        <end position="278"/>
    </location>
</feature>
<feature type="topological domain" description="Cytoplasmic" evidence="1">
    <location>
        <begin position="279"/>
        <end position="298"/>
    </location>
</feature>
<feature type="disulfide bond" evidence="2">
    <location>
        <begin position="83"/>
        <end position="164"/>
    </location>
</feature>
<keyword id="KW-1003">Cell membrane</keyword>
<keyword id="KW-1015">Disulfide bond</keyword>
<keyword id="KW-0297">G-protein coupled receptor</keyword>
<keyword id="KW-0472">Membrane</keyword>
<keyword id="KW-0552">Olfaction</keyword>
<keyword id="KW-0675">Receptor</keyword>
<keyword id="KW-1185">Reference proteome</keyword>
<keyword id="KW-0716">Sensory transduction</keyword>
<keyword id="KW-0807">Transducer</keyword>
<keyword id="KW-0812">Transmembrane</keyword>
<keyword id="KW-1133">Transmembrane helix</keyword>
<accession>P0C646</accession>
<accession>A0A087X1Z4</accession>